<keyword id="KW-0067">ATP-binding</keyword>
<keyword id="KW-0963">Cytoplasm</keyword>
<keyword id="KW-0237">DNA synthesis</keyword>
<keyword id="KW-0418">Kinase</keyword>
<keyword id="KW-0479">Metal-binding</keyword>
<keyword id="KW-0547">Nucleotide-binding</keyword>
<keyword id="KW-1185">Reference proteome</keyword>
<keyword id="KW-0808">Transferase</keyword>
<keyword id="KW-0862">Zinc</keyword>
<gene>
    <name evidence="1" type="primary">tdk</name>
    <name type="ordered locus">FTL_0890</name>
</gene>
<comment type="catalytic activity">
    <reaction evidence="1">
        <text>thymidine + ATP = dTMP + ADP + H(+)</text>
        <dbReference type="Rhea" id="RHEA:19129"/>
        <dbReference type="ChEBI" id="CHEBI:15378"/>
        <dbReference type="ChEBI" id="CHEBI:17748"/>
        <dbReference type="ChEBI" id="CHEBI:30616"/>
        <dbReference type="ChEBI" id="CHEBI:63528"/>
        <dbReference type="ChEBI" id="CHEBI:456216"/>
        <dbReference type="EC" id="2.7.1.21"/>
    </reaction>
</comment>
<comment type="subunit">
    <text evidence="1">Homotetramer.</text>
</comment>
<comment type="subcellular location">
    <subcellularLocation>
        <location evidence="1">Cytoplasm</location>
    </subcellularLocation>
</comment>
<comment type="similarity">
    <text evidence="1">Belongs to the thymidine kinase family.</text>
</comment>
<name>KITH_FRATH</name>
<accession>Q2A3U3</accession>
<feature type="chain" id="PRO_0000242791" description="Thymidine kinase">
    <location>
        <begin position="1"/>
        <end position="197"/>
    </location>
</feature>
<feature type="active site" description="Proton acceptor" evidence="1">
    <location>
        <position position="88"/>
    </location>
</feature>
<feature type="binding site" evidence="1">
    <location>
        <begin position="9"/>
        <end position="16"/>
    </location>
    <ligand>
        <name>ATP</name>
        <dbReference type="ChEBI" id="CHEBI:30616"/>
    </ligand>
</feature>
<feature type="binding site" evidence="1">
    <location>
        <begin position="87"/>
        <end position="90"/>
    </location>
    <ligand>
        <name>ATP</name>
        <dbReference type="ChEBI" id="CHEBI:30616"/>
    </ligand>
</feature>
<feature type="binding site" evidence="1">
    <location>
        <position position="145"/>
    </location>
    <ligand>
        <name>Zn(2+)</name>
        <dbReference type="ChEBI" id="CHEBI:29105"/>
    </ligand>
</feature>
<feature type="binding site" evidence="1">
    <location>
        <position position="147"/>
    </location>
    <ligand>
        <name>Zn(2+)</name>
        <dbReference type="ChEBI" id="CHEBI:29105"/>
    </ligand>
</feature>
<feature type="binding site" evidence="1">
    <location>
        <position position="187"/>
    </location>
    <ligand>
        <name>Zn(2+)</name>
        <dbReference type="ChEBI" id="CHEBI:29105"/>
    </ligand>
</feature>
<feature type="binding site" evidence="1">
    <location>
        <position position="190"/>
    </location>
    <ligand>
        <name>Zn(2+)</name>
        <dbReference type="ChEBI" id="CHEBI:29105"/>
    </ligand>
</feature>
<sequence length="197" mass="22474">MAKLYFRYSAMDAGKTLDLLKVAYNYEDRGRKPLVLTSAIDKRAGLNKVKSRIGIDQDAYSLTDRDNIFEFVENYNSSNKIDCVLIDEIHFFTQEQVWQLAEIVDELNIPVICYGLRTNYLGQPFETAALLLAIADTLEEVKTICHCGKKASFNMMVQNGKAIKQGNPIVVDDDSLKEIDTKYVSVCRKHWKEGVYE</sequence>
<proteinExistence type="inferred from homology"/>
<organism>
    <name type="scientific">Francisella tularensis subsp. holarctica (strain LVS)</name>
    <dbReference type="NCBI Taxonomy" id="376619"/>
    <lineage>
        <taxon>Bacteria</taxon>
        <taxon>Pseudomonadati</taxon>
        <taxon>Pseudomonadota</taxon>
        <taxon>Gammaproteobacteria</taxon>
        <taxon>Thiotrichales</taxon>
        <taxon>Francisellaceae</taxon>
        <taxon>Francisella</taxon>
    </lineage>
</organism>
<protein>
    <recommendedName>
        <fullName evidence="1">Thymidine kinase</fullName>
        <ecNumber evidence="1">2.7.1.21</ecNumber>
    </recommendedName>
</protein>
<dbReference type="EC" id="2.7.1.21" evidence="1"/>
<dbReference type="EMBL" id="AM233362">
    <property type="protein sequence ID" value="CAJ79329.1"/>
    <property type="molecule type" value="Genomic_DNA"/>
</dbReference>
<dbReference type="RefSeq" id="WP_003018771.1">
    <property type="nucleotide sequence ID" value="NZ_CP009694.1"/>
</dbReference>
<dbReference type="SMR" id="Q2A3U3"/>
<dbReference type="KEGG" id="ftl:FTL_0890"/>
<dbReference type="Proteomes" id="UP000001944">
    <property type="component" value="Chromosome"/>
</dbReference>
<dbReference type="GO" id="GO:0005829">
    <property type="term" value="C:cytosol"/>
    <property type="evidence" value="ECO:0007669"/>
    <property type="project" value="TreeGrafter"/>
</dbReference>
<dbReference type="GO" id="GO:0005524">
    <property type="term" value="F:ATP binding"/>
    <property type="evidence" value="ECO:0007669"/>
    <property type="project" value="UniProtKB-UniRule"/>
</dbReference>
<dbReference type="GO" id="GO:0004797">
    <property type="term" value="F:thymidine kinase activity"/>
    <property type="evidence" value="ECO:0007669"/>
    <property type="project" value="UniProtKB-UniRule"/>
</dbReference>
<dbReference type="GO" id="GO:0008270">
    <property type="term" value="F:zinc ion binding"/>
    <property type="evidence" value="ECO:0007669"/>
    <property type="project" value="UniProtKB-UniRule"/>
</dbReference>
<dbReference type="GO" id="GO:0071897">
    <property type="term" value="P:DNA biosynthetic process"/>
    <property type="evidence" value="ECO:0007669"/>
    <property type="project" value="UniProtKB-KW"/>
</dbReference>
<dbReference type="GO" id="GO:0046104">
    <property type="term" value="P:thymidine metabolic process"/>
    <property type="evidence" value="ECO:0007669"/>
    <property type="project" value="TreeGrafter"/>
</dbReference>
<dbReference type="Gene3D" id="3.40.50.300">
    <property type="entry name" value="P-loop containing nucleotide triphosphate hydrolases"/>
    <property type="match status" value="1"/>
</dbReference>
<dbReference type="HAMAP" id="MF_00124">
    <property type="entry name" value="Thymidine_kinase"/>
    <property type="match status" value="1"/>
</dbReference>
<dbReference type="InterPro" id="IPR027417">
    <property type="entry name" value="P-loop_NTPase"/>
</dbReference>
<dbReference type="InterPro" id="IPR001267">
    <property type="entry name" value="Thymidine_kinase"/>
</dbReference>
<dbReference type="NCBIfam" id="NF003300">
    <property type="entry name" value="PRK04296.1-5"/>
    <property type="match status" value="1"/>
</dbReference>
<dbReference type="PANTHER" id="PTHR11441">
    <property type="entry name" value="THYMIDINE KINASE"/>
    <property type="match status" value="1"/>
</dbReference>
<dbReference type="PANTHER" id="PTHR11441:SF0">
    <property type="entry name" value="THYMIDINE KINASE, CYTOSOLIC"/>
    <property type="match status" value="1"/>
</dbReference>
<dbReference type="Pfam" id="PF00265">
    <property type="entry name" value="TK"/>
    <property type="match status" value="1"/>
</dbReference>
<dbReference type="PIRSF" id="PIRSF035805">
    <property type="entry name" value="TK_cell"/>
    <property type="match status" value="1"/>
</dbReference>
<dbReference type="SUPFAM" id="SSF57716">
    <property type="entry name" value="Glucocorticoid receptor-like (DNA-binding domain)"/>
    <property type="match status" value="1"/>
</dbReference>
<dbReference type="SUPFAM" id="SSF52540">
    <property type="entry name" value="P-loop containing nucleoside triphosphate hydrolases"/>
    <property type="match status" value="1"/>
</dbReference>
<evidence type="ECO:0000255" key="1">
    <source>
        <dbReference type="HAMAP-Rule" id="MF_00124"/>
    </source>
</evidence>
<reference key="1">
    <citation type="submission" date="2006-03" db="EMBL/GenBank/DDBJ databases">
        <title>Complete genome sequence of Francisella tularensis LVS (Live Vaccine Strain).</title>
        <authorList>
            <person name="Chain P."/>
            <person name="Larimer F."/>
            <person name="Land M."/>
            <person name="Stilwagen S."/>
            <person name="Larsson P."/>
            <person name="Bearden S."/>
            <person name="Chu M."/>
            <person name="Oyston P."/>
            <person name="Forsman M."/>
            <person name="Andersson S."/>
            <person name="Lindler L."/>
            <person name="Titball R."/>
            <person name="Garcia E."/>
        </authorList>
    </citation>
    <scope>NUCLEOTIDE SEQUENCE [LARGE SCALE GENOMIC DNA]</scope>
    <source>
        <strain>LVS</strain>
    </source>
</reference>